<sequence>MQYKDENGVNEPSRRRLLKGIGALAGSCPVAHAQKTQSAPGTLSPDARNEKQPFYGEHQAGILTPQQAAMMLVAFDVLASDKADLERLFRLLTQRFAFLSQGGAAPETPNPRLPPLDSGILGGYIAPDNLTITLSVGHSLFDERFGLAPQMPKKLQKMTRFPNDSLDAALCHGDVLLQICANTQDTVNHALRDIIKHTPDLLSVRWKREGFISDHAARSKGKETPINLLGFKDGTANPDSQNDKLMQKVVWVTADQQEPAWTIGGSYQAVRLIQFRVEFWDRTPLKEQQTIFGRDKQTGAPLGMQHEHDVPDYASDPEGKVIALDSHIRLANPRTAESESSLMLRRGYSYSLGVTNSGQLDMGLLFVCYQHDLEKGFLTVQKRLNGEALEEYVKPIGGGYFFSLPGVKDANDYLGRALLQV</sequence>
<keyword id="KW-0349">Heme</keyword>
<keyword id="KW-0408">Iron</keyword>
<keyword id="KW-0456">Lyase</keyword>
<keyword id="KW-0479">Metal-binding</keyword>
<keyword id="KW-0560">Oxidoreductase</keyword>
<keyword id="KW-0574">Periplasm</keyword>
<keyword id="KW-0575">Peroxidase</keyword>
<keyword id="KW-0677">Repeat</keyword>
<keyword id="KW-0732">Signal</keyword>
<organism>
    <name type="scientific">Shigella flexneri serotype 5b (strain 8401)</name>
    <dbReference type="NCBI Taxonomy" id="373384"/>
    <lineage>
        <taxon>Bacteria</taxon>
        <taxon>Pseudomonadati</taxon>
        <taxon>Pseudomonadota</taxon>
        <taxon>Gammaproteobacteria</taxon>
        <taxon>Enterobacterales</taxon>
        <taxon>Enterobacteriaceae</taxon>
        <taxon>Shigella</taxon>
    </lineage>
</organism>
<protein>
    <recommendedName>
        <fullName>Deferrochelatase</fullName>
        <ecNumber evidence="2">4.98.1.1</ecNumber>
    </recommendedName>
    <alternativeName>
        <fullName>Peroxidase EfeB</fullName>
        <ecNumber evidence="2">1.11.1.-</ecNumber>
    </alternativeName>
</protein>
<evidence type="ECO:0000250" key="1"/>
<evidence type="ECO:0000250" key="2">
    <source>
        <dbReference type="UniProtKB" id="P31545"/>
    </source>
</evidence>
<evidence type="ECO:0000255" key="3">
    <source>
        <dbReference type="PROSITE-ProRule" id="PRU00648"/>
    </source>
</evidence>
<evidence type="ECO:0000256" key="4">
    <source>
        <dbReference type="SAM" id="MobiDB-lite"/>
    </source>
</evidence>
<evidence type="ECO:0000305" key="5"/>
<gene>
    <name type="primary">efeB</name>
    <name type="ordered locus">SFV_1030</name>
</gene>
<name>EFEB_SHIF8</name>
<comment type="function">
    <text evidence="2">Involved in the recovery of exogenous heme iron. Extracts iron from heme while preserving the protoporphyrin ring intact.</text>
</comment>
<comment type="catalytic activity">
    <reaction evidence="2">
        <text>heme b + 2 H(+) = protoporphyrin IX + Fe(2+)</text>
        <dbReference type="Rhea" id="RHEA:22584"/>
        <dbReference type="ChEBI" id="CHEBI:15378"/>
        <dbReference type="ChEBI" id="CHEBI:29033"/>
        <dbReference type="ChEBI" id="CHEBI:57306"/>
        <dbReference type="ChEBI" id="CHEBI:60344"/>
        <dbReference type="EC" id="4.98.1.1"/>
    </reaction>
    <physiologicalReaction direction="left-to-right" evidence="2">
        <dbReference type="Rhea" id="RHEA:22585"/>
    </physiologicalReaction>
</comment>
<comment type="cofactor">
    <cofactor evidence="1">
        <name>heme b</name>
        <dbReference type="ChEBI" id="CHEBI:60344"/>
    </cofactor>
    <text evidence="1">Binds 1 heme b (iron(II)-protoporphyrin IX) group non-covalently per subunit.</text>
</comment>
<comment type="subunit">
    <text evidence="1">Homodimer. Part of a ferrous iron transporter composed of EfeU, EfeO and EfeB (By similarity).</text>
</comment>
<comment type="subcellular location">
    <subcellularLocation>
        <location evidence="1">Periplasm</location>
    </subcellularLocation>
</comment>
<comment type="PTM">
    <text>Predicted to be exported by the Tat system. The position of the signal peptide cleavage has not been experimentally proven.</text>
</comment>
<comment type="similarity">
    <text evidence="5">Belongs to the DyP-type peroxidase family. EfeB subfamily.</text>
</comment>
<accession>Q0T616</accession>
<dbReference type="EC" id="4.98.1.1" evidence="2"/>
<dbReference type="EC" id="1.11.1.-" evidence="2"/>
<dbReference type="EMBL" id="CP000266">
    <property type="protein sequence ID" value="ABF03249.1"/>
    <property type="molecule type" value="Genomic_DNA"/>
</dbReference>
<dbReference type="RefSeq" id="WP_001199452.1">
    <property type="nucleotide sequence ID" value="NC_008258.1"/>
</dbReference>
<dbReference type="SMR" id="Q0T616"/>
<dbReference type="PeroxiBase" id="5873">
    <property type="entry name" value="SflDyPrx01"/>
</dbReference>
<dbReference type="KEGG" id="sfv:SFV_1030"/>
<dbReference type="HOGENOM" id="CLU_039488_0_0_6"/>
<dbReference type="Proteomes" id="UP000000659">
    <property type="component" value="Chromosome"/>
</dbReference>
<dbReference type="GO" id="GO:0005829">
    <property type="term" value="C:cytosol"/>
    <property type="evidence" value="ECO:0007669"/>
    <property type="project" value="TreeGrafter"/>
</dbReference>
<dbReference type="GO" id="GO:0042597">
    <property type="term" value="C:periplasmic space"/>
    <property type="evidence" value="ECO:0007669"/>
    <property type="project" value="UniProtKB-SubCell"/>
</dbReference>
<dbReference type="GO" id="GO:0004325">
    <property type="term" value="F:ferrochelatase activity"/>
    <property type="evidence" value="ECO:0007669"/>
    <property type="project" value="RHEA"/>
</dbReference>
<dbReference type="GO" id="GO:0020037">
    <property type="term" value="F:heme binding"/>
    <property type="evidence" value="ECO:0007669"/>
    <property type="project" value="InterPro"/>
</dbReference>
<dbReference type="GO" id="GO:0046872">
    <property type="term" value="F:metal ion binding"/>
    <property type="evidence" value="ECO:0007669"/>
    <property type="project" value="UniProtKB-KW"/>
</dbReference>
<dbReference type="GO" id="GO:0004601">
    <property type="term" value="F:peroxidase activity"/>
    <property type="evidence" value="ECO:0007669"/>
    <property type="project" value="UniProtKB-KW"/>
</dbReference>
<dbReference type="GO" id="GO:0033212">
    <property type="term" value="P:iron import into cell"/>
    <property type="evidence" value="ECO:0007669"/>
    <property type="project" value="InterPro"/>
</dbReference>
<dbReference type="InterPro" id="IPR011008">
    <property type="entry name" value="Dimeric_a/b-barrel"/>
</dbReference>
<dbReference type="InterPro" id="IPR048328">
    <property type="entry name" value="Dyp_perox_C"/>
</dbReference>
<dbReference type="InterPro" id="IPR048327">
    <property type="entry name" value="Dyp_perox_N"/>
</dbReference>
<dbReference type="InterPro" id="IPR006314">
    <property type="entry name" value="Dyp_peroxidase"/>
</dbReference>
<dbReference type="InterPro" id="IPR006313">
    <property type="entry name" value="EfeB/EfeN"/>
</dbReference>
<dbReference type="InterPro" id="IPR006311">
    <property type="entry name" value="TAT_signal"/>
</dbReference>
<dbReference type="NCBIfam" id="TIGR01413">
    <property type="entry name" value="Dyp_perox_fam"/>
    <property type="match status" value="1"/>
</dbReference>
<dbReference type="NCBIfam" id="TIGR01412">
    <property type="entry name" value="tat_substr_1"/>
    <property type="match status" value="1"/>
</dbReference>
<dbReference type="PANTHER" id="PTHR30521:SF4">
    <property type="entry name" value="DEFERROCHELATASE"/>
    <property type="match status" value="1"/>
</dbReference>
<dbReference type="PANTHER" id="PTHR30521">
    <property type="entry name" value="DEFERROCHELATASE/PEROXIDASE"/>
    <property type="match status" value="1"/>
</dbReference>
<dbReference type="Pfam" id="PF20628">
    <property type="entry name" value="Dyp_perox_C"/>
    <property type="match status" value="1"/>
</dbReference>
<dbReference type="Pfam" id="PF04261">
    <property type="entry name" value="Dyp_perox_N"/>
    <property type="match status" value="1"/>
</dbReference>
<dbReference type="SUPFAM" id="SSF54909">
    <property type="entry name" value="Dimeric alpha+beta barrel"/>
    <property type="match status" value="1"/>
</dbReference>
<dbReference type="PROSITE" id="PS51404">
    <property type="entry name" value="DYP_PEROXIDASE"/>
    <property type="match status" value="1"/>
</dbReference>
<dbReference type="PROSITE" id="PS51318">
    <property type="entry name" value="TAT"/>
    <property type="match status" value="1"/>
</dbReference>
<reference key="1">
    <citation type="journal article" date="2006" name="BMC Genomics">
        <title>Complete genome sequence of Shigella flexneri 5b and comparison with Shigella flexneri 2a.</title>
        <authorList>
            <person name="Nie H."/>
            <person name="Yang F."/>
            <person name="Zhang X."/>
            <person name="Yang J."/>
            <person name="Chen L."/>
            <person name="Wang J."/>
            <person name="Xiong Z."/>
            <person name="Peng J."/>
            <person name="Sun L."/>
            <person name="Dong J."/>
            <person name="Xue Y."/>
            <person name="Xu X."/>
            <person name="Chen S."/>
            <person name="Yao Z."/>
            <person name="Shen Y."/>
            <person name="Jin Q."/>
        </authorList>
    </citation>
    <scope>NUCLEOTIDE SEQUENCE [LARGE SCALE GENOMIC DNA]</scope>
    <source>
        <strain>8401</strain>
    </source>
</reference>
<proteinExistence type="inferred from homology"/>
<feature type="signal peptide" description="Tat-type signal" evidence="3">
    <location>
        <begin position="1"/>
        <end position="33"/>
    </location>
</feature>
<feature type="chain" id="PRO_0000278549" description="Deferrochelatase">
    <location>
        <begin position="34"/>
        <end position="421"/>
    </location>
</feature>
<feature type="region of interest" description="Disordered" evidence="4">
    <location>
        <begin position="32"/>
        <end position="51"/>
    </location>
</feature>
<feature type="binding site" evidence="2">
    <location>
        <begin position="234"/>
        <end position="236"/>
    </location>
    <ligand>
        <name>heme b</name>
        <dbReference type="ChEBI" id="CHEBI:60344"/>
    </ligand>
</feature>
<feature type="binding site" description="proximal binding residue" evidence="2">
    <location>
        <position position="327"/>
    </location>
    <ligand>
        <name>heme b</name>
        <dbReference type="ChEBI" id="CHEBI:60344"/>
    </ligand>
    <ligandPart>
        <name>Fe</name>
        <dbReference type="ChEBI" id="CHEBI:18248"/>
    </ligandPart>
</feature>
<feature type="binding site" evidence="2">
    <location>
        <begin position="332"/>
        <end position="334"/>
    </location>
    <ligand>
        <name>heme b</name>
        <dbReference type="ChEBI" id="CHEBI:60344"/>
    </ligand>
</feature>
<feature type="binding site" evidence="2">
    <location>
        <position position="345"/>
    </location>
    <ligand>
        <name>heme b</name>
        <dbReference type="ChEBI" id="CHEBI:60344"/>
    </ligand>
</feature>